<protein>
    <recommendedName>
        <fullName>Manganese transport system membrane protein MntD</fullName>
    </recommendedName>
</protein>
<accession>O34500</accession>
<feature type="chain" id="PRO_0000171153" description="Manganese transport system membrane protein MntD">
    <location>
        <begin position="1"/>
        <end position="295"/>
    </location>
</feature>
<feature type="transmembrane region" description="Helical" evidence="1">
    <location>
        <begin position="7"/>
        <end position="27"/>
    </location>
</feature>
<feature type="transmembrane region" description="Helical" evidence="1">
    <location>
        <begin position="42"/>
        <end position="62"/>
    </location>
</feature>
<feature type="transmembrane region" description="Helical" evidence="1">
    <location>
        <begin position="63"/>
        <end position="83"/>
    </location>
</feature>
<feature type="transmembrane region" description="Helical" evidence="1">
    <location>
        <begin position="87"/>
        <end position="107"/>
    </location>
</feature>
<feature type="transmembrane region" description="Helical" evidence="1">
    <location>
        <begin position="138"/>
        <end position="158"/>
    </location>
</feature>
<feature type="transmembrane region" description="Helical" evidence="1">
    <location>
        <begin position="174"/>
        <end position="194"/>
    </location>
</feature>
<feature type="transmembrane region" description="Helical" evidence="1">
    <location>
        <begin position="203"/>
        <end position="223"/>
    </location>
</feature>
<feature type="transmembrane region" description="Helical" evidence="1">
    <location>
        <begin position="227"/>
        <end position="247"/>
    </location>
</feature>
<feature type="transmembrane region" description="Helical" evidence="1">
    <location>
        <begin position="253"/>
        <end position="273"/>
    </location>
</feature>
<comment type="function">
    <text evidence="5">Probably part of the ABC transporter complex MntABCD involved in manganese import. Probably responsible for the translocation of the substrate across the membrane.</text>
</comment>
<comment type="subunit">
    <text evidence="5">The complex is probably composed of two ATP-binding proteins (MntB), two transmembrane proteins (MntC and MntD) and a solute-binding protein (MntA).</text>
</comment>
<comment type="subcellular location">
    <subcellularLocation>
        <location evidence="4">Cell membrane</location>
        <topology evidence="4">Multi-pass membrane protein</topology>
    </subcellularLocation>
</comment>
<comment type="induction">
    <text evidence="2">Repressed by MntR in the presence of manganese.</text>
</comment>
<comment type="similarity">
    <text evidence="4">Belongs to the ABC-3 integral membrane protein family.</text>
</comment>
<name>MNTD_BACSU</name>
<evidence type="ECO:0000255" key="1"/>
<evidence type="ECO:0000269" key="2">
    <source>
    </source>
</evidence>
<evidence type="ECO:0000303" key="3">
    <source>
    </source>
</evidence>
<evidence type="ECO:0000305" key="4"/>
<evidence type="ECO:0000305" key="5">
    <source>
    </source>
</evidence>
<dbReference type="EMBL" id="AF008220">
    <property type="protein sequence ID" value="AAC00232.1"/>
    <property type="molecule type" value="Genomic_DNA"/>
</dbReference>
<dbReference type="EMBL" id="AL009126">
    <property type="protein sequence ID" value="CAB15052.1"/>
    <property type="molecule type" value="Genomic_DNA"/>
</dbReference>
<dbReference type="PIR" id="E69992">
    <property type="entry name" value="E69992"/>
</dbReference>
<dbReference type="RefSeq" id="NP_390952.1">
    <property type="nucleotide sequence ID" value="NC_000964.3"/>
</dbReference>
<dbReference type="RefSeq" id="WP_003229067.1">
    <property type="nucleotide sequence ID" value="NZ_OZ025638.1"/>
</dbReference>
<dbReference type="SMR" id="O34500"/>
<dbReference type="FunCoup" id="O34500">
    <property type="interactions" value="171"/>
</dbReference>
<dbReference type="STRING" id="224308.BSU30740"/>
<dbReference type="PaxDb" id="224308-BSU30740"/>
<dbReference type="EnsemblBacteria" id="CAB15052">
    <property type="protein sequence ID" value="CAB15052"/>
    <property type="gene ID" value="BSU_30740"/>
</dbReference>
<dbReference type="GeneID" id="937149"/>
<dbReference type="KEGG" id="bsu:BSU30740"/>
<dbReference type="PATRIC" id="fig|224308.179.peg.3332"/>
<dbReference type="eggNOG" id="COG1108">
    <property type="taxonomic scope" value="Bacteria"/>
</dbReference>
<dbReference type="InParanoid" id="O34500"/>
<dbReference type="OrthoDB" id="9788905at2"/>
<dbReference type="PhylomeDB" id="O34500"/>
<dbReference type="BioCyc" id="BSUB:BSU30740-MONOMER"/>
<dbReference type="Proteomes" id="UP000001570">
    <property type="component" value="Chromosome"/>
</dbReference>
<dbReference type="GO" id="GO:0043190">
    <property type="term" value="C:ATP-binding cassette (ABC) transporter complex"/>
    <property type="evidence" value="ECO:0007669"/>
    <property type="project" value="InterPro"/>
</dbReference>
<dbReference type="GO" id="GO:0005886">
    <property type="term" value="C:plasma membrane"/>
    <property type="evidence" value="ECO:0000318"/>
    <property type="project" value="GO_Central"/>
</dbReference>
<dbReference type="GO" id="GO:0006811">
    <property type="term" value="P:monoatomic ion transport"/>
    <property type="evidence" value="ECO:0007669"/>
    <property type="project" value="UniProtKB-KW"/>
</dbReference>
<dbReference type="GO" id="GO:0010043">
    <property type="term" value="P:response to zinc ion"/>
    <property type="evidence" value="ECO:0000318"/>
    <property type="project" value="GO_Central"/>
</dbReference>
<dbReference type="GO" id="GO:0055085">
    <property type="term" value="P:transmembrane transport"/>
    <property type="evidence" value="ECO:0007669"/>
    <property type="project" value="InterPro"/>
</dbReference>
<dbReference type="CDD" id="cd06550">
    <property type="entry name" value="TM_ABC_iron-siderophores_like"/>
    <property type="match status" value="1"/>
</dbReference>
<dbReference type="FunFam" id="1.10.3470.10:FF:000020">
    <property type="entry name" value="Manganese ABC transporter permease protein"/>
    <property type="match status" value="1"/>
</dbReference>
<dbReference type="Gene3D" id="1.10.3470.10">
    <property type="entry name" value="ABC transporter involved in vitamin B12 uptake, BtuC"/>
    <property type="match status" value="1"/>
</dbReference>
<dbReference type="InterPro" id="IPR037294">
    <property type="entry name" value="ABC_BtuC-like"/>
</dbReference>
<dbReference type="InterPro" id="IPR001626">
    <property type="entry name" value="ABC_TroCD"/>
</dbReference>
<dbReference type="PANTHER" id="PTHR30477">
    <property type="entry name" value="ABC-TRANSPORTER METAL-BINDING PROTEIN"/>
    <property type="match status" value="1"/>
</dbReference>
<dbReference type="PANTHER" id="PTHR30477:SF8">
    <property type="entry name" value="METAL TRANSPORT SYSTEM MEMBRANE PROTEIN CT_070-RELATED"/>
    <property type="match status" value="1"/>
</dbReference>
<dbReference type="Pfam" id="PF00950">
    <property type="entry name" value="ABC-3"/>
    <property type="match status" value="1"/>
</dbReference>
<dbReference type="SUPFAM" id="SSF81345">
    <property type="entry name" value="ABC transporter involved in vitamin B12 uptake, BtuC"/>
    <property type="match status" value="1"/>
</dbReference>
<proteinExistence type="evidence at transcript level"/>
<sequence length="295" mass="31058">MSFEAWIIATGVLVGVSCGLIGTFLVLRSMAMLADAISHTVLLGIVGAFLVTGSLDGIYMFIGAAATGLLTAFLVQLLHSKGVQSDAAIGVVFTSLFAIGVILLSVYGANVHLDIEHSLMGEIAFVPWNTVTVFGVDIGPKAFWMLASVLVLNVVLISVCYKEFKIASFDPQMALALGIPVLLIHYVQMGMLSLTTVASFDSVGAVLVVAMLIVPPAAAHLLTDRLLYMLILSALIGGLSAVMGYFFATWLNVSISGAMAAMTGVCYASAFLFSPANGVITKKLRTLNMQKERAG</sequence>
<gene>
    <name evidence="3" type="primary">mntD</name>
    <name type="synonym">ytgD</name>
    <name type="ordered locus">BSU30740</name>
</gene>
<organism>
    <name type="scientific">Bacillus subtilis (strain 168)</name>
    <dbReference type="NCBI Taxonomy" id="224308"/>
    <lineage>
        <taxon>Bacteria</taxon>
        <taxon>Bacillati</taxon>
        <taxon>Bacillota</taxon>
        <taxon>Bacilli</taxon>
        <taxon>Bacillales</taxon>
        <taxon>Bacillaceae</taxon>
        <taxon>Bacillus</taxon>
    </lineage>
</organism>
<keyword id="KW-1003">Cell membrane</keyword>
<keyword id="KW-0406">Ion transport</keyword>
<keyword id="KW-0472">Membrane</keyword>
<keyword id="KW-1185">Reference proteome</keyword>
<keyword id="KW-0812">Transmembrane</keyword>
<keyword id="KW-1133">Transmembrane helix</keyword>
<keyword id="KW-0813">Transport</keyword>
<reference key="1">
    <citation type="journal article" date="1997" name="Microbiology">
        <title>Sequencing and functional annotation of the Bacillus subtilis genes in the 200 kb rrnB-dnaB region.</title>
        <authorList>
            <person name="Lapidus A."/>
            <person name="Galleron N."/>
            <person name="Sorokin A."/>
            <person name="Ehrlich S.D."/>
        </authorList>
    </citation>
    <scope>NUCLEOTIDE SEQUENCE [GENOMIC DNA]</scope>
    <source>
        <strain>168</strain>
    </source>
</reference>
<reference key="2">
    <citation type="journal article" date="1997" name="Nature">
        <title>The complete genome sequence of the Gram-positive bacterium Bacillus subtilis.</title>
        <authorList>
            <person name="Kunst F."/>
            <person name="Ogasawara N."/>
            <person name="Moszer I."/>
            <person name="Albertini A.M."/>
            <person name="Alloni G."/>
            <person name="Azevedo V."/>
            <person name="Bertero M.G."/>
            <person name="Bessieres P."/>
            <person name="Bolotin A."/>
            <person name="Borchert S."/>
            <person name="Borriss R."/>
            <person name="Boursier L."/>
            <person name="Brans A."/>
            <person name="Braun M."/>
            <person name="Brignell S.C."/>
            <person name="Bron S."/>
            <person name="Brouillet S."/>
            <person name="Bruschi C.V."/>
            <person name="Caldwell B."/>
            <person name="Capuano V."/>
            <person name="Carter N.M."/>
            <person name="Choi S.-K."/>
            <person name="Codani J.-J."/>
            <person name="Connerton I.F."/>
            <person name="Cummings N.J."/>
            <person name="Daniel R.A."/>
            <person name="Denizot F."/>
            <person name="Devine K.M."/>
            <person name="Duesterhoeft A."/>
            <person name="Ehrlich S.D."/>
            <person name="Emmerson P.T."/>
            <person name="Entian K.-D."/>
            <person name="Errington J."/>
            <person name="Fabret C."/>
            <person name="Ferrari E."/>
            <person name="Foulger D."/>
            <person name="Fritz C."/>
            <person name="Fujita M."/>
            <person name="Fujita Y."/>
            <person name="Fuma S."/>
            <person name="Galizzi A."/>
            <person name="Galleron N."/>
            <person name="Ghim S.-Y."/>
            <person name="Glaser P."/>
            <person name="Goffeau A."/>
            <person name="Golightly E.J."/>
            <person name="Grandi G."/>
            <person name="Guiseppi G."/>
            <person name="Guy B.J."/>
            <person name="Haga K."/>
            <person name="Haiech J."/>
            <person name="Harwood C.R."/>
            <person name="Henaut A."/>
            <person name="Hilbert H."/>
            <person name="Holsappel S."/>
            <person name="Hosono S."/>
            <person name="Hullo M.-F."/>
            <person name="Itaya M."/>
            <person name="Jones L.-M."/>
            <person name="Joris B."/>
            <person name="Karamata D."/>
            <person name="Kasahara Y."/>
            <person name="Klaerr-Blanchard M."/>
            <person name="Klein C."/>
            <person name="Kobayashi Y."/>
            <person name="Koetter P."/>
            <person name="Koningstein G."/>
            <person name="Krogh S."/>
            <person name="Kumano M."/>
            <person name="Kurita K."/>
            <person name="Lapidus A."/>
            <person name="Lardinois S."/>
            <person name="Lauber J."/>
            <person name="Lazarevic V."/>
            <person name="Lee S.-M."/>
            <person name="Levine A."/>
            <person name="Liu H."/>
            <person name="Masuda S."/>
            <person name="Mauel C."/>
            <person name="Medigue C."/>
            <person name="Medina N."/>
            <person name="Mellado R.P."/>
            <person name="Mizuno M."/>
            <person name="Moestl D."/>
            <person name="Nakai S."/>
            <person name="Noback M."/>
            <person name="Noone D."/>
            <person name="O'Reilly M."/>
            <person name="Ogawa K."/>
            <person name="Ogiwara A."/>
            <person name="Oudega B."/>
            <person name="Park S.-H."/>
            <person name="Parro V."/>
            <person name="Pohl T.M."/>
            <person name="Portetelle D."/>
            <person name="Porwollik S."/>
            <person name="Prescott A.M."/>
            <person name="Presecan E."/>
            <person name="Pujic P."/>
            <person name="Purnelle B."/>
            <person name="Rapoport G."/>
            <person name="Rey M."/>
            <person name="Reynolds S."/>
            <person name="Rieger M."/>
            <person name="Rivolta C."/>
            <person name="Rocha E."/>
            <person name="Roche B."/>
            <person name="Rose M."/>
            <person name="Sadaie Y."/>
            <person name="Sato T."/>
            <person name="Scanlan E."/>
            <person name="Schleich S."/>
            <person name="Schroeter R."/>
            <person name="Scoffone F."/>
            <person name="Sekiguchi J."/>
            <person name="Sekowska A."/>
            <person name="Seror S.J."/>
            <person name="Serror P."/>
            <person name="Shin B.-S."/>
            <person name="Soldo B."/>
            <person name="Sorokin A."/>
            <person name="Tacconi E."/>
            <person name="Takagi T."/>
            <person name="Takahashi H."/>
            <person name="Takemaru K."/>
            <person name="Takeuchi M."/>
            <person name="Tamakoshi A."/>
            <person name="Tanaka T."/>
            <person name="Terpstra P."/>
            <person name="Tognoni A."/>
            <person name="Tosato V."/>
            <person name="Uchiyama S."/>
            <person name="Vandenbol M."/>
            <person name="Vannier F."/>
            <person name="Vassarotti A."/>
            <person name="Viari A."/>
            <person name="Wambutt R."/>
            <person name="Wedler E."/>
            <person name="Wedler H."/>
            <person name="Weitzenegger T."/>
            <person name="Winters P."/>
            <person name="Wipat A."/>
            <person name="Yamamoto H."/>
            <person name="Yamane K."/>
            <person name="Yasumoto K."/>
            <person name="Yata K."/>
            <person name="Yoshida K."/>
            <person name="Yoshikawa H.-F."/>
            <person name="Zumstein E."/>
            <person name="Yoshikawa H."/>
            <person name="Danchin A."/>
        </authorList>
    </citation>
    <scope>NUCLEOTIDE SEQUENCE [LARGE SCALE GENOMIC DNA]</scope>
    <source>
        <strain>168</strain>
    </source>
</reference>
<reference key="3">
    <citation type="journal article" date="2000" name="Mol. Microbiol.">
        <title>Manganese homeostasis in Bacillus subtilis is regulated by MntR, a bifunctional regulator related to the diphtheria toxin repressor family of proteins.</title>
        <authorList>
            <person name="Que Q."/>
            <person name="Helmann J.D."/>
        </authorList>
    </citation>
    <scope>POSSIBLE FUNCTION</scope>
</reference>
<reference key="4">
    <citation type="journal article" date="2003" name="Mol. Microbiol.">
        <title>The global transcriptional response of Bacillus subtilis to manganese involves the MntR, Fur, TnrA and sigmaB regulons.</title>
        <authorList>
            <person name="Guedon E."/>
            <person name="Moore C.M."/>
            <person name="Que Q."/>
            <person name="Wang T."/>
            <person name="Ye R.W."/>
            <person name="Helmann J.D."/>
        </authorList>
    </citation>
    <scope>INDUCTION</scope>
</reference>